<reference key="1">
    <citation type="submission" date="2006-03" db="EMBL/GenBank/DDBJ databases">
        <title>Complete sequence of chromosome of Nitrobacter hamburgensis X14.</title>
        <authorList>
            <consortium name="US DOE Joint Genome Institute"/>
            <person name="Copeland A."/>
            <person name="Lucas S."/>
            <person name="Lapidus A."/>
            <person name="Barry K."/>
            <person name="Detter J.C."/>
            <person name="Glavina del Rio T."/>
            <person name="Hammon N."/>
            <person name="Israni S."/>
            <person name="Dalin E."/>
            <person name="Tice H."/>
            <person name="Pitluck S."/>
            <person name="Chain P."/>
            <person name="Malfatti S."/>
            <person name="Shin M."/>
            <person name="Vergez L."/>
            <person name="Schmutz J."/>
            <person name="Larimer F."/>
            <person name="Land M."/>
            <person name="Hauser L."/>
            <person name="Kyrpides N."/>
            <person name="Ivanova N."/>
            <person name="Ward B."/>
            <person name="Arp D."/>
            <person name="Klotz M."/>
            <person name="Stein L."/>
            <person name="O'Mullan G."/>
            <person name="Starkenburg S."/>
            <person name="Sayavedra L."/>
            <person name="Poret-Peterson A.T."/>
            <person name="Gentry M.E."/>
            <person name="Bruce D."/>
            <person name="Richardson P."/>
        </authorList>
    </citation>
    <scope>NUCLEOTIDE SEQUENCE [LARGE SCALE GENOMIC DNA]</scope>
    <source>
        <strain>DSM 10229 / NCIMB 13809 / X14</strain>
    </source>
</reference>
<gene>
    <name evidence="1" type="primary">rplI</name>
    <name type="ordered locus">Nham_2415</name>
</gene>
<comment type="function">
    <text evidence="1">Binds to the 23S rRNA.</text>
</comment>
<comment type="similarity">
    <text evidence="1">Belongs to the bacterial ribosomal protein bL9 family.</text>
</comment>
<feature type="chain" id="PRO_0000258474" description="Large ribosomal subunit protein bL9">
    <location>
        <begin position="1"/>
        <end position="202"/>
    </location>
</feature>
<feature type="region of interest" description="Disordered" evidence="2">
    <location>
        <begin position="177"/>
        <end position="202"/>
    </location>
</feature>
<feature type="compositionally biased region" description="Acidic residues" evidence="2">
    <location>
        <begin position="181"/>
        <end position="191"/>
    </location>
</feature>
<organism>
    <name type="scientific">Nitrobacter hamburgensis (strain DSM 10229 / NCIMB 13809 / X14)</name>
    <dbReference type="NCBI Taxonomy" id="323097"/>
    <lineage>
        <taxon>Bacteria</taxon>
        <taxon>Pseudomonadati</taxon>
        <taxon>Pseudomonadota</taxon>
        <taxon>Alphaproteobacteria</taxon>
        <taxon>Hyphomicrobiales</taxon>
        <taxon>Nitrobacteraceae</taxon>
        <taxon>Nitrobacter</taxon>
    </lineage>
</organism>
<keyword id="KW-1185">Reference proteome</keyword>
<keyword id="KW-0687">Ribonucleoprotein</keyword>
<keyword id="KW-0689">Ribosomal protein</keyword>
<keyword id="KW-0694">RNA-binding</keyword>
<keyword id="KW-0699">rRNA-binding</keyword>
<protein>
    <recommendedName>
        <fullName evidence="1">Large ribosomal subunit protein bL9</fullName>
    </recommendedName>
    <alternativeName>
        <fullName evidence="3">50S ribosomal protein L9</fullName>
    </alternativeName>
</protein>
<dbReference type="EMBL" id="CP000319">
    <property type="protein sequence ID" value="ABE63205.1"/>
    <property type="molecule type" value="Genomic_DNA"/>
</dbReference>
<dbReference type="RefSeq" id="WP_011510878.1">
    <property type="nucleotide sequence ID" value="NC_007964.1"/>
</dbReference>
<dbReference type="SMR" id="Q1QKP2"/>
<dbReference type="STRING" id="323097.Nham_2415"/>
<dbReference type="KEGG" id="nha:Nham_2415"/>
<dbReference type="eggNOG" id="COG0359">
    <property type="taxonomic scope" value="Bacteria"/>
</dbReference>
<dbReference type="HOGENOM" id="CLU_078938_1_0_5"/>
<dbReference type="OrthoDB" id="9788336at2"/>
<dbReference type="Proteomes" id="UP000001953">
    <property type="component" value="Chromosome"/>
</dbReference>
<dbReference type="GO" id="GO:1990904">
    <property type="term" value="C:ribonucleoprotein complex"/>
    <property type="evidence" value="ECO:0007669"/>
    <property type="project" value="UniProtKB-KW"/>
</dbReference>
<dbReference type="GO" id="GO:0005840">
    <property type="term" value="C:ribosome"/>
    <property type="evidence" value="ECO:0007669"/>
    <property type="project" value="UniProtKB-KW"/>
</dbReference>
<dbReference type="GO" id="GO:0019843">
    <property type="term" value="F:rRNA binding"/>
    <property type="evidence" value="ECO:0007669"/>
    <property type="project" value="UniProtKB-UniRule"/>
</dbReference>
<dbReference type="GO" id="GO:0003735">
    <property type="term" value="F:structural constituent of ribosome"/>
    <property type="evidence" value="ECO:0007669"/>
    <property type="project" value="InterPro"/>
</dbReference>
<dbReference type="GO" id="GO:0006412">
    <property type="term" value="P:translation"/>
    <property type="evidence" value="ECO:0007669"/>
    <property type="project" value="UniProtKB-UniRule"/>
</dbReference>
<dbReference type="Gene3D" id="3.10.430.100">
    <property type="entry name" value="Ribosomal protein L9, C-terminal domain"/>
    <property type="match status" value="1"/>
</dbReference>
<dbReference type="Gene3D" id="3.40.5.10">
    <property type="entry name" value="Ribosomal protein L9, N-terminal domain"/>
    <property type="match status" value="1"/>
</dbReference>
<dbReference type="HAMAP" id="MF_00503">
    <property type="entry name" value="Ribosomal_bL9"/>
    <property type="match status" value="1"/>
</dbReference>
<dbReference type="InterPro" id="IPR000244">
    <property type="entry name" value="Ribosomal_bL9"/>
</dbReference>
<dbReference type="InterPro" id="IPR009027">
    <property type="entry name" value="Ribosomal_bL9/RNase_H1_N"/>
</dbReference>
<dbReference type="InterPro" id="IPR020594">
    <property type="entry name" value="Ribosomal_bL9_bac/chp"/>
</dbReference>
<dbReference type="InterPro" id="IPR020069">
    <property type="entry name" value="Ribosomal_bL9_C"/>
</dbReference>
<dbReference type="InterPro" id="IPR036791">
    <property type="entry name" value="Ribosomal_bL9_C_sf"/>
</dbReference>
<dbReference type="InterPro" id="IPR020070">
    <property type="entry name" value="Ribosomal_bL9_N"/>
</dbReference>
<dbReference type="InterPro" id="IPR036935">
    <property type="entry name" value="Ribosomal_bL9_N_sf"/>
</dbReference>
<dbReference type="NCBIfam" id="TIGR00158">
    <property type="entry name" value="L9"/>
    <property type="match status" value="1"/>
</dbReference>
<dbReference type="PANTHER" id="PTHR21368">
    <property type="entry name" value="50S RIBOSOMAL PROTEIN L9"/>
    <property type="match status" value="1"/>
</dbReference>
<dbReference type="Pfam" id="PF03948">
    <property type="entry name" value="Ribosomal_L9_C"/>
    <property type="match status" value="1"/>
</dbReference>
<dbReference type="Pfam" id="PF01281">
    <property type="entry name" value="Ribosomal_L9_N"/>
    <property type="match status" value="1"/>
</dbReference>
<dbReference type="SUPFAM" id="SSF55658">
    <property type="entry name" value="L9 N-domain-like"/>
    <property type="match status" value="1"/>
</dbReference>
<dbReference type="SUPFAM" id="SSF55653">
    <property type="entry name" value="Ribosomal protein L9 C-domain"/>
    <property type="match status" value="1"/>
</dbReference>
<dbReference type="PROSITE" id="PS00651">
    <property type="entry name" value="RIBOSOMAL_L9"/>
    <property type="match status" value="1"/>
</dbReference>
<evidence type="ECO:0000255" key="1">
    <source>
        <dbReference type="HAMAP-Rule" id="MF_00503"/>
    </source>
</evidence>
<evidence type="ECO:0000256" key="2">
    <source>
        <dbReference type="SAM" id="MobiDB-lite"/>
    </source>
</evidence>
<evidence type="ECO:0000305" key="3"/>
<proteinExistence type="inferred from homology"/>
<accession>Q1QKP2</accession>
<sequence>MEVILLERVAKLGQMGDVVKVKHGFARNFLLKRGKALRATAENRTKYDGMKAELEINNIKAKGEAAKVAEKIDGRDIVIIRQASETGQLFGSVTVRDIVAALAEDGITVSRPQVWLDAPIKTIGQQKLTVAVHPEVEAHVMVTVARSADEAERIKRGEDISTRREDRDAAAEAIAAAGEFFDPEAEPDDVAEAGGEQTAEEK</sequence>
<name>RL9_NITHX</name>